<feature type="chain" id="PRO_0000084668" description="ATP-dependent zinc metalloprotease YME1L1">
    <location>
        <begin position="1"/>
        <end position="715"/>
    </location>
</feature>
<feature type="topological domain" description="Mitochondrial matrix" evidence="3">
    <location>
        <begin position="1"/>
        <end position="237"/>
    </location>
</feature>
<feature type="transmembrane region" description="Helical" evidence="3">
    <location>
        <begin position="238"/>
        <end position="258"/>
    </location>
</feature>
<feature type="topological domain" description="Mitochondrial intermembrane" evidence="3">
    <location>
        <begin position="259"/>
        <end position="715"/>
    </location>
</feature>
<feature type="region of interest" description="Disordered" evidence="4">
    <location>
        <begin position="34"/>
        <end position="54"/>
    </location>
</feature>
<feature type="compositionally biased region" description="Basic and acidic residues" evidence="4">
    <location>
        <begin position="41"/>
        <end position="52"/>
    </location>
</feature>
<feature type="active site" evidence="14">
    <location>
        <position position="542"/>
    </location>
</feature>
<feature type="binding site" evidence="2">
    <location>
        <position position="283"/>
    </location>
    <ligand>
        <name>ATP</name>
        <dbReference type="ChEBI" id="CHEBI:30616"/>
    </ligand>
</feature>
<feature type="binding site" evidence="2">
    <location>
        <position position="325"/>
    </location>
    <ligand>
        <name>ATP</name>
        <dbReference type="ChEBI" id="CHEBI:30616"/>
    </ligand>
</feature>
<feature type="binding site" evidence="2">
    <location>
        <position position="326"/>
    </location>
    <ligand>
        <name>ATP</name>
        <dbReference type="ChEBI" id="CHEBI:30616"/>
    </ligand>
</feature>
<feature type="binding site" evidence="2">
    <location>
        <position position="327"/>
    </location>
    <ligand>
        <name>ATP</name>
        <dbReference type="ChEBI" id="CHEBI:30616"/>
    </ligand>
</feature>
<feature type="binding site" evidence="2">
    <location>
        <position position="328"/>
    </location>
    <ligand>
        <name>ATP</name>
        <dbReference type="ChEBI" id="CHEBI:30616"/>
    </ligand>
</feature>
<feature type="binding site" evidence="2">
    <location>
        <position position="329"/>
    </location>
    <ligand>
        <name>ATP</name>
        <dbReference type="ChEBI" id="CHEBI:30616"/>
    </ligand>
</feature>
<feature type="binding site" evidence="2">
    <location>
        <position position="541"/>
    </location>
    <ligand>
        <name>Zn(2+)</name>
        <dbReference type="ChEBI" id="CHEBI:29105"/>
        <note>catalytic</note>
    </ligand>
</feature>
<feature type="binding site" evidence="2">
    <location>
        <position position="545"/>
    </location>
    <ligand>
        <name>Zn(2+)</name>
        <dbReference type="ChEBI" id="CHEBI:29105"/>
        <note>catalytic</note>
    </ligand>
</feature>
<feature type="binding site" evidence="2">
    <location>
        <position position="619"/>
    </location>
    <ligand>
        <name>Zn(2+)</name>
        <dbReference type="ChEBI" id="CHEBI:29105"/>
        <note>catalytic</note>
    </ligand>
</feature>
<feature type="mutagenesis site" description="Loss of protease activity." evidence="12">
    <original>E</original>
    <variation>Q</variation>
    <location>
        <position position="542"/>
    </location>
</feature>
<reference key="1">
    <citation type="submission" date="1998-09" db="EMBL/GenBank/DDBJ databases">
        <title>A member of the FtsH/YME1 family of ATP-dependent metalloproteases from the mouse genome.</title>
        <authorList>
            <person name="Butterworth T."/>
            <person name="Taylor H.C."/>
            <person name="Zvetkova I."/>
            <person name="Poinat P."/>
            <person name="Stott D."/>
        </authorList>
    </citation>
    <scope>NUCLEOTIDE SEQUENCE [MRNA]</scope>
</reference>
<reference key="2">
    <citation type="submission" date="2002-07" db="EMBL/GenBank/DDBJ databases">
        <title>Cloning and characterization of Yme1l1 homolog in mice.</title>
        <authorList>
            <person name="Ganesh S."/>
            <person name="Suzuki T."/>
            <person name="Yamakawa K."/>
        </authorList>
    </citation>
    <scope>NUCLEOTIDE SEQUENCE [MRNA]</scope>
    <source>
        <strain>ICR</strain>
        <tissue>Brain</tissue>
    </source>
</reference>
<reference key="3">
    <citation type="journal article" date="2005" name="Science">
        <title>The transcriptional landscape of the mammalian genome.</title>
        <authorList>
            <person name="Carninci P."/>
            <person name="Kasukawa T."/>
            <person name="Katayama S."/>
            <person name="Gough J."/>
            <person name="Frith M.C."/>
            <person name="Maeda N."/>
            <person name="Oyama R."/>
            <person name="Ravasi T."/>
            <person name="Lenhard B."/>
            <person name="Wells C."/>
            <person name="Kodzius R."/>
            <person name="Shimokawa K."/>
            <person name="Bajic V.B."/>
            <person name="Brenner S.E."/>
            <person name="Batalov S."/>
            <person name="Forrest A.R."/>
            <person name="Zavolan M."/>
            <person name="Davis M.J."/>
            <person name="Wilming L.G."/>
            <person name="Aidinis V."/>
            <person name="Allen J.E."/>
            <person name="Ambesi-Impiombato A."/>
            <person name="Apweiler R."/>
            <person name="Aturaliya R.N."/>
            <person name="Bailey T.L."/>
            <person name="Bansal M."/>
            <person name="Baxter L."/>
            <person name="Beisel K.W."/>
            <person name="Bersano T."/>
            <person name="Bono H."/>
            <person name="Chalk A.M."/>
            <person name="Chiu K.P."/>
            <person name="Choudhary V."/>
            <person name="Christoffels A."/>
            <person name="Clutterbuck D.R."/>
            <person name="Crowe M.L."/>
            <person name="Dalla E."/>
            <person name="Dalrymple B.P."/>
            <person name="de Bono B."/>
            <person name="Della Gatta G."/>
            <person name="di Bernardo D."/>
            <person name="Down T."/>
            <person name="Engstrom P."/>
            <person name="Fagiolini M."/>
            <person name="Faulkner G."/>
            <person name="Fletcher C.F."/>
            <person name="Fukushima T."/>
            <person name="Furuno M."/>
            <person name="Futaki S."/>
            <person name="Gariboldi M."/>
            <person name="Georgii-Hemming P."/>
            <person name="Gingeras T.R."/>
            <person name="Gojobori T."/>
            <person name="Green R.E."/>
            <person name="Gustincich S."/>
            <person name="Harbers M."/>
            <person name="Hayashi Y."/>
            <person name="Hensch T.K."/>
            <person name="Hirokawa N."/>
            <person name="Hill D."/>
            <person name="Huminiecki L."/>
            <person name="Iacono M."/>
            <person name="Ikeo K."/>
            <person name="Iwama A."/>
            <person name="Ishikawa T."/>
            <person name="Jakt M."/>
            <person name="Kanapin A."/>
            <person name="Katoh M."/>
            <person name="Kawasawa Y."/>
            <person name="Kelso J."/>
            <person name="Kitamura H."/>
            <person name="Kitano H."/>
            <person name="Kollias G."/>
            <person name="Krishnan S.P."/>
            <person name="Kruger A."/>
            <person name="Kummerfeld S.K."/>
            <person name="Kurochkin I.V."/>
            <person name="Lareau L.F."/>
            <person name="Lazarevic D."/>
            <person name="Lipovich L."/>
            <person name="Liu J."/>
            <person name="Liuni S."/>
            <person name="McWilliam S."/>
            <person name="Madan Babu M."/>
            <person name="Madera M."/>
            <person name="Marchionni L."/>
            <person name="Matsuda H."/>
            <person name="Matsuzawa S."/>
            <person name="Miki H."/>
            <person name="Mignone F."/>
            <person name="Miyake S."/>
            <person name="Morris K."/>
            <person name="Mottagui-Tabar S."/>
            <person name="Mulder N."/>
            <person name="Nakano N."/>
            <person name="Nakauchi H."/>
            <person name="Ng P."/>
            <person name="Nilsson R."/>
            <person name="Nishiguchi S."/>
            <person name="Nishikawa S."/>
            <person name="Nori F."/>
            <person name="Ohara O."/>
            <person name="Okazaki Y."/>
            <person name="Orlando V."/>
            <person name="Pang K.C."/>
            <person name="Pavan W.J."/>
            <person name="Pavesi G."/>
            <person name="Pesole G."/>
            <person name="Petrovsky N."/>
            <person name="Piazza S."/>
            <person name="Reed J."/>
            <person name="Reid J.F."/>
            <person name="Ring B.Z."/>
            <person name="Ringwald M."/>
            <person name="Rost B."/>
            <person name="Ruan Y."/>
            <person name="Salzberg S.L."/>
            <person name="Sandelin A."/>
            <person name="Schneider C."/>
            <person name="Schoenbach C."/>
            <person name="Sekiguchi K."/>
            <person name="Semple C.A."/>
            <person name="Seno S."/>
            <person name="Sessa L."/>
            <person name="Sheng Y."/>
            <person name="Shibata Y."/>
            <person name="Shimada H."/>
            <person name="Shimada K."/>
            <person name="Silva D."/>
            <person name="Sinclair B."/>
            <person name="Sperling S."/>
            <person name="Stupka E."/>
            <person name="Sugiura K."/>
            <person name="Sultana R."/>
            <person name="Takenaka Y."/>
            <person name="Taki K."/>
            <person name="Tammoja K."/>
            <person name="Tan S.L."/>
            <person name="Tang S."/>
            <person name="Taylor M.S."/>
            <person name="Tegner J."/>
            <person name="Teichmann S.A."/>
            <person name="Ueda H.R."/>
            <person name="van Nimwegen E."/>
            <person name="Verardo R."/>
            <person name="Wei C.L."/>
            <person name="Yagi K."/>
            <person name="Yamanishi H."/>
            <person name="Zabarovsky E."/>
            <person name="Zhu S."/>
            <person name="Zimmer A."/>
            <person name="Hide W."/>
            <person name="Bult C."/>
            <person name="Grimmond S.M."/>
            <person name="Teasdale R.D."/>
            <person name="Liu E.T."/>
            <person name="Brusic V."/>
            <person name="Quackenbush J."/>
            <person name="Wahlestedt C."/>
            <person name="Mattick J.S."/>
            <person name="Hume D.A."/>
            <person name="Kai C."/>
            <person name="Sasaki D."/>
            <person name="Tomaru Y."/>
            <person name="Fukuda S."/>
            <person name="Kanamori-Katayama M."/>
            <person name="Suzuki M."/>
            <person name="Aoki J."/>
            <person name="Arakawa T."/>
            <person name="Iida J."/>
            <person name="Imamura K."/>
            <person name="Itoh M."/>
            <person name="Kato T."/>
            <person name="Kawaji H."/>
            <person name="Kawagashira N."/>
            <person name="Kawashima T."/>
            <person name="Kojima M."/>
            <person name="Kondo S."/>
            <person name="Konno H."/>
            <person name="Nakano K."/>
            <person name="Ninomiya N."/>
            <person name="Nishio T."/>
            <person name="Okada M."/>
            <person name="Plessy C."/>
            <person name="Shibata K."/>
            <person name="Shiraki T."/>
            <person name="Suzuki S."/>
            <person name="Tagami M."/>
            <person name="Waki K."/>
            <person name="Watahiki A."/>
            <person name="Okamura-Oho Y."/>
            <person name="Suzuki H."/>
            <person name="Kawai J."/>
            <person name="Hayashizaki Y."/>
        </authorList>
    </citation>
    <scope>NUCLEOTIDE SEQUENCE [LARGE SCALE MRNA]</scope>
    <source>
        <strain>C57BL/6J</strain>
        <tissue>Urinary bladder</tissue>
    </source>
</reference>
<reference key="4">
    <citation type="journal article" date="2004" name="Genome Res.">
        <title>The status, quality, and expansion of the NIH full-length cDNA project: the Mammalian Gene Collection (MGC).</title>
        <authorList>
            <consortium name="The MGC Project Team"/>
        </authorList>
    </citation>
    <scope>NUCLEOTIDE SEQUENCE [LARGE SCALE MRNA]</scope>
</reference>
<reference key="5">
    <citation type="journal article" date="2007" name="J. Cell Biol.">
        <title>OPA1 processing controls mitochondrial fusion and is regulated by mRNA splicing, membrane potential, and Yme1L.</title>
        <authorList>
            <person name="Song Z."/>
            <person name="Chen H."/>
            <person name="Fiket M."/>
            <person name="Alexander C."/>
            <person name="Chan D.C."/>
        </authorList>
    </citation>
    <scope>FUNCTION</scope>
</reference>
<reference key="6">
    <citation type="journal article" date="2010" name="Cell">
        <title>A tissue-specific atlas of mouse protein phosphorylation and expression.</title>
        <authorList>
            <person name="Huttlin E.L."/>
            <person name="Jedrychowski M.P."/>
            <person name="Elias J.E."/>
            <person name="Goswami T."/>
            <person name="Rad R."/>
            <person name="Beausoleil S.A."/>
            <person name="Villen J."/>
            <person name="Haas W."/>
            <person name="Sowa M.E."/>
            <person name="Gygi S.P."/>
        </authorList>
    </citation>
    <scope>IDENTIFICATION BY MASS SPECTROMETRY [LARGE SCALE ANALYSIS]</scope>
    <source>
        <tissue>Brain</tissue>
        <tissue>Brown adipose tissue</tissue>
        <tissue>Heart</tissue>
        <tissue>Kidney</tissue>
        <tissue>Liver</tissue>
        <tissue>Lung</tissue>
        <tissue>Pancreas</tissue>
        <tissue>Spleen</tissue>
        <tissue>Testis</tissue>
    </source>
</reference>
<reference key="7">
    <citation type="journal article" date="2014" name="Cell Metab.">
        <title>Proteolytic cleavage of Opa1 stimulates mitochondrial inner membrane fusion and couples fusion to oxidative phosphorylation.</title>
        <authorList>
            <person name="Mishra P."/>
            <person name="Carelli V."/>
            <person name="Manfredi G."/>
            <person name="Chan D.C."/>
        </authorList>
    </citation>
    <scope>FUNCTION</scope>
</reference>
<reference key="8">
    <citation type="journal article" date="2014" name="J. Cell Biol.">
        <title>The i-AAA protease YME1L and OMA1 cleave OPA1 to balance mitochondrial fusion and fission.</title>
        <authorList>
            <person name="Anand R."/>
            <person name="Wai T."/>
            <person name="Baker M.J."/>
            <person name="Kladt N."/>
            <person name="Schauss A.C."/>
            <person name="Rugarli E."/>
            <person name="Langer T."/>
        </authorList>
    </citation>
    <scope>FUNCTION</scope>
</reference>
<reference key="9">
    <citation type="journal article" date="2015" name="Science">
        <title>Imbalanced OPA1 processing and mitochondrial fragmentation cause heart failure in mice.</title>
        <authorList>
            <person name="Wai T."/>
            <person name="Garcia-Prieto J."/>
            <person name="Baker M.J."/>
            <person name="Merkwirth C."/>
            <person name="Benit P."/>
            <person name="Rustin P."/>
            <person name="Ruperez F.J."/>
            <person name="Barbas C."/>
            <person name="Ibanez B."/>
            <person name="Langer T."/>
        </authorList>
    </citation>
    <scope>FUNCTION</scope>
    <scope>DISRUPTION PHENOTYPE</scope>
    <scope>TISSUE SPECIFICITY</scope>
</reference>
<reference key="10">
    <citation type="journal article" date="2016" name="Elife">
        <title>Homozygous YME1L1 mutation causes mitochondriopathy with optic atrophy and mitochondrial network fragmentation.</title>
        <authorList>
            <person name="Hartmann B."/>
            <person name="Wai T."/>
            <person name="Hu H."/>
            <person name="MacVicar T."/>
            <person name="Musante L."/>
            <person name="Fischer-Zirnsak B."/>
            <person name="Stenzel W."/>
            <person name="Graef R."/>
            <person name="van den Heuvel L."/>
            <person name="Ropers H.H."/>
            <person name="Wienker T.F."/>
            <person name="Huebner C."/>
            <person name="Langer T."/>
            <person name="Kaindl A.M."/>
        </authorList>
    </citation>
    <scope>FUNCTION</scope>
    <scope>CATALYTIC ACTIVITY</scope>
</reference>
<reference key="11">
    <citation type="journal article" date="2019" name="EMBO Mol. Med.">
        <title>Loss of the mitochondrial i-AAA protease YME1L leads to ocular dysfunction and spinal axonopathy.</title>
        <authorList>
            <person name="Sprenger H.G."/>
            <person name="Wani G."/>
            <person name="Hesseling A."/>
            <person name="Koenig T."/>
            <person name="Patron M."/>
            <person name="MacVicar T."/>
            <person name="Ahola S."/>
            <person name="Wai T."/>
            <person name="Barth E."/>
            <person name="Rugarli E.I."/>
            <person name="Bergami M."/>
            <person name="Langer T."/>
        </authorList>
    </citation>
    <scope>DISRUPTION PHENOTYPE</scope>
</reference>
<reference key="12">
    <citation type="journal article" date="2021" name="Mol. Biol. Cell">
        <title>Identification of new OPA1 cleavage site reveals that short isoforms regulate mitochondrial fusion.</title>
        <authorList>
            <person name="Wang R."/>
            <person name="Mishra P."/>
            <person name="Garbis S.D."/>
            <person name="Moradian A."/>
            <person name="Sweredoski M.J."/>
            <person name="Chan D.C."/>
        </authorList>
    </citation>
    <scope>FUNCTION</scope>
</reference>
<reference key="13">
    <citation type="journal article" date="2022" name="Cell Rep.">
        <title>Metabolic control of adult neural stem cell self-renewal by the mitochondrial protease YME1L.</title>
        <authorList>
            <person name="Wani G.A."/>
            <person name="Sprenger H.G."/>
            <person name="Ndoci K."/>
            <person name="Chandragiri S."/>
            <person name="Acton R.J."/>
            <person name="Schatton D."/>
            <person name="Kochan S.M.V."/>
            <person name="Sakthivelu V."/>
            <person name="Jevtic M."/>
            <person name="Seeger J.M."/>
            <person name="Mueller S."/>
            <person name="Giavalisco P."/>
            <person name="Rugarli E.I."/>
            <person name="Motori E."/>
            <person name="Langer T."/>
            <person name="Bergami M."/>
        </authorList>
    </citation>
    <scope>FUNCTION</scope>
    <scope>ACTIVE SITE</scope>
    <scope>DISRUPTION PHENOTYPE</scope>
    <scope>MUTAGENESIS OF GLU-542</scope>
</reference>
<dbReference type="EC" id="3.4.24.-" evidence="9 11 12"/>
<dbReference type="EC" id="3.6.-.-" evidence="1"/>
<dbReference type="EMBL" id="AF090430">
    <property type="protein sequence ID" value="AAC35558.1"/>
    <property type="molecule type" value="mRNA"/>
</dbReference>
<dbReference type="EMBL" id="AY136286">
    <property type="protein sequence ID" value="AAN17724.1"/>
    <property type="molecule type" value="mRNA"/>
</dbReference>
<dbReference type="EMBL" id="AY136287">
    <property type="protein sequence ID" value="AAN17725.1"/>
    <property type="molecule type" value="mRNA"/>
</dbReference>
<dbReference type="EMBL" id="AK079175">
    <property type="protein sequence ID" value="BAC37568.1"/>
    <property type="molecule type" value="mRNA"/>
</dbReference>
<dbReference type="EMBL" id="BC007128">
    <property type="protein sequence ID" value="AAH07128.1"/>
    <property type="molecule type" value="mRNA"/>
</dbReference>
<dbReference type="CCDS" id="CCDS15728.1"/>
<dbReference type="RefSeq" id="NP_038799.1">
    <property type="nucleotide sequence ID" value="NM_013771.5"/>
</dbReference>
<dbReference type="SMR" id="O88967"/>
<dbReference type="BioGRID" id="205184">
    <property type="interactions" value="9"/>
</dbReference>
<dbReference type="FunCoup" id="O88967">
    <property type="interactions" value="4569"/>
</dbReference>
<dbReference type="IntAct" id="O88967">
    <property type="interactions" value="4"/>
</dbReference>
<dbReference type="MINT" id="O88967"/>
<dbReference type="STRING" id="10090.ENSMUSP00000028117"/>
<dbReference type="MEROPS" id="M41.026"/>
<dbReference type="GlyGen" id="O88967">
    <property type="glycosylation" value="4 sites, 4 N-linked glycans (4 sites)"/>
</dbReference>
<dbReference type="iPTMnet" id="O88967"/>
<dbReference type="PhosphoSitePlus" id="O88967"/>
<dbReference type="PaxDb" id="10090-ENSMUSP00000028117"/>
<dbReference type="PeptideAtlas" id="O88967"/>
<dbReference type="ProteomicsDB" id="275254"/>
<dbReference type="Pumba" id="O88967"/>
<dbReference type="Antibodypedia" id="44412">
    <property type="antibodies" value="169 antibodies from 25 providers"/>
</dbReference>
<dbReference type="DNASU" id="27377"/>
<dbReference type="Ensembl" id="ENSMUST00000028117.4">
    <property type="protein sequence ID" value="ENSMUSP00000028117.4"/>
    <property type="gene ID" value="ENSMUSG00000026775.10"/>
</dbReference>
<dbReference type="GeneID" id="27377"/>
<dbReference type="KEGG" id="mmu:27377"/>
<dbReference type="UCSC" id="uc008ioe.2">
    <property type="organism name" value="mouse"/>
</dbReference>
<dbReference type="AGR" id="MGI:1351651"/>
<dbReference type="CTD" id="10730"/>
<dbReference type="MGI" id="MGI:1351651">
    <property type="gene designation" value="Yme1l1"/>
</dbReference>
<dbReference type="VEuPathDB" id="HostDB:ENSMUSG00000026775"/>
<dbReference type="eggNOG" id="KOG0734">
    <property type="taxonomic scope" value="Eukaryota"/>
</dbReference>
<dbReference type="GeneTree" id="ENSGT00550000074836"/>
<dbReference type="HOGENOM" id="CLU_000688_19_2_1"/>
<dbReference type="InParanoid" id="O88967"/>
<dbReference type="OMA" id="KYDSDPM"/>
<dbReference type="OrthoDB" id="1413014at2759"/>
<dbReference type="PhylomeDB" id="O88967"/>
<dbReference type="TreeFam" id="TF105005"/>
<dbReference type="BRENDA" id="3.4.24.B19">
    <property type="organism ID" value="3474"/>
</dbReference>
<dbReference type="Reactome" id="R-MMU-8949664">
    <property type="pathway name" value="Processing of SMDT1"/>
</dbReference>
<dbReference type="Reactome" id="R-MMU-9840373">
    <property type="pathway name" value="Cellular response to mitochondrial stress"/>
</dbReference>
<dbReference type="BioGRID-ORCS" id="27377">
    <property type="hits" value="18 hits in 80 CRISPR screens"/>
</dbReference>
<dbReference type="ChiTaRS" id="Yme1l1">
    <property type="organism name" value="mouse"/>
</dbReference>
<dbReference type="PRO" id="PR:O88967"/>
<dbReference type="Proteomes" id="UP000000589">
    <property type="component" value="Chromosome 2"/>
</dbReference>
<dbReference type="RNAct" id="O88967">
    <property type="molecule type" value="protein"/>
</dbReference>
<dbReference type="Bgee" id="ENSMUSG00000026775">
    <property type="expression patterns" value="Expressed in embryonic brain and 259 other cell types or tissues"/>
</dbReference>
<dbReference type="GO" id="GO:0005743">
    <property type="term" value="C:mitochondrial inner membrane"/>
    <property type="evidence" value="ECO:0000250"/>
    <property type="project" value="UniProtKB"/>
</dbReference>
<dbReference type="GO" id="GO:0005739">
    <property type="term" value="C:mitochondrion"/>
    <property type="evidence" value="ECO:0007005"/>
    <property type="project" value="MGI"/>
</dbReference>
<dbReference type="GO" id="GO:0016604">
    <property type="term" value="C:nuclear body"/>
    <property type="evidence" value="ECO:0007669"/>
    <property type="project" value="Ensembl"/>
</dbReference>
<dbReference type="GO" id="GO:0005524">
    <property type="term" value="F:ATP binding"/>
    <property type="evidence" value="ECO:0007669"/>
    <property type="project" value="UniProtKB-KW"/>
</dbReference>
<dbReference type="GO" id="GO:0016887">
    <property type="term" value="F:ATP hydrolysis activity"/>
    <property type="evidence" value="ECO:0007669"/>
    <property type="project" value="InterPro"/>
</dbReference>
<dbReference type="GO" id="GO:0004176">
    <property type="term" value="F:ATP-dependent peptidase activity"/>
    <property type="evidence" value="ECO:0000314"/>
    <property type="project" value="UniProtKB"/>
</dbReference>
<dbReference type="GO" id="GO:0046872">
    <property type="term" value="F:metal ion binding"/>
    <property type="evidence" value="ECO:0007669"/>
    <property type="project" value="UniProtKB-KW"/>
</dbReference>
<dbReference type="GO" id="GO:0004222">
    <property type="term" value="F:metalloendopeptidase activity"/>
    <property type="evidence" value="ECO:0007669"/>
    <property type="project" value="InterPro"/>
</dbReference>
<dbReference type="GO" id="GO:0008283">
    <property type="term" value="P:cell population proliferation"/>
    <property type="evidence" value="ECO:0000250"/>
    <property type="project" value="UniProtKB"/>
</dbReference>
<dbReference type="GO" id="GO:0009267">
    <property type="term" value="P:cellular response to starvation"/>
    <property type="evidence" value="ECO:0000250"/>
    <property type="project" value="UniProtKB"/>
</dbReference>
<dbReference type="GO" id="GO:0035694">
    <property type="term" value="P:mitochondrial protein catabolic process"/>
    <property type="evidence" value="ECO:0007669"/>
    <property type="project" value="Ensembl"/>
</dbReference>
<dbReference type="GO" id="GO:0034982">
    <property type="term" value="P:mitochondrial protein processing"/>
    <property type="evidence" value="ECO:0000315"/>
    <property type="project" value="UniProtKB"/>
</dbReference>
<dbReference type="GO" id="GO:0007005">
    <property type="term" value="P:mitochondrion organization"/>
    <property type="evidence" value="ECO:0000250"/>
    <property type="project" value="UniProtKB"/>
</dbReference>
<dbReference type="GO" id="GO:0043066">
    <property type="term" value="P:negative regulation of apoptotic process"/>
    <property type="evidence" value="ECO:0000250"/>
    <property type="project" value="UniProtKB"/>
</dbReference>
<dbReference type="GO" id="GO:0097150">
    <property type="term" value="P:neuronal stem cell population maintenance"/>
    <property type="evidence" value="ECO:0000314"/>
    <property type="project" value="UniProtKB"/>
</dbReference>
<dbReference type="GO" id="GO:0010636">
    <property type="term" value="P:positive regulation of mitochondrial fusion"/>
    <property type="evidence" value="ECO:0000314"/>
    <property type="project" value="UniProtKB"/>
</dbReference>
<dbReference type="GO" id="GO:0034214">
    <property type="term" value="P:protein hexamerization"/>
    <property type="evidence" value="ECO:0007669"/>
    <property type="project" value="Ensembl"/>
</dbReference>
<dbReference type="GO" id="GO:0006515">
    <property type="term" value="P:protein quality control for misfolded or incompletely synthesized proteins"/>
    <property type="evidence" value="ECO:0000250"/>
    <property type="project" value="UniProtKB"/>
</dbReference>
<dbReference type="GO" id="GO:2000035">
    <property type="term" value="P:regulation of stem cell division"/>
    <property type="evidence" value="ECO:0000314"/>
    <property type="project" value="UniProtKB"/>
</dbReference>
<dbReference type="CDD" id="cd19501">
    <property type="entry name" value="RecA-like_FtsH"/>
    <property type="match status" value="1"/>
</dbReference>
<dbReference type="FunFam" id="1.10.8.60:FF:000001">
    <property type="entry name" value="ATP-dependent zinc metalloprotease FtsH"/>
    <property type="match status" value="1"/>
</dbReference>
<dbReference type="FunFam" id="1.20.58.760:FF:000002">
    <property type="entry name" value="ATP-dependent zinc metalloprotease FtsH"/>
    <property type="match status" value="1"/>
</dbReference>
<dbReference type="FunFam" id="3.40.50.300:FF:000195">
    <property type="entry name" value="ATP-dependent zinc metalloprotease FTSH 11"/>
    <property type="match status" value="1"/>
</dbReference>
<dbReference type="Gene3D" id="1.10.8.60">
    <property type="match status" value="1"/>
</dbReference>
<dbReference type="Gene3D" id="3.40.50.300">
    <property type="entry name" value="P-loop containing nucleotide triphosphate hydrolases"/>
    <property type="match status" value="1"/>
</dbReference>
<dbReference type="Gene3D" id="1.20.58.760">
    <property type="entry name" value="Peptidase M41"/>
    <property type="match status" value="1"/>
</dbReference>
<dbReference type="HAMAP" id="MF_01458">
    <property type="entry name" value="FtsH"/>
    <property type="match status" value="1"/>
</dbReference>
<dbReference type="InterPro" id="IPR003593">
    <property type="entry name" value="AAA+_ATPase"/>
</dbReference>
<dbReference type="InterPro" id="IPR041569">
    <property type="entry name" value="AAA_lid_3"/>
</dbReference>
<dbReference type="InterPro" id="IPR003959">
    <property type="entry name" value="ATPase_AAA_core"/>
</dbReference>
<dbReference type="InterPro" id="IPR003960">
    <property type="entry name" value="ATPase_AAA_CS"/>
</dbReference>
<dbReference type="InterPro" id="IPR005936">
    <property type="entry name" value="FtsH"/>
</dbReference>
<dbReference type="InterPro" id="IPR027417">
    <property type="entry name" value="P-loop_NTPase"/>
</dbReference>
<dbReference type="InterPro" id="IPR000642">
    <property type="entry name" value="Peptidase_M41"/>
</dbReference>
<dbReference type="InterPro" id="IPR037219">
    <property type="entry name" value="Peptidase_M41-like"/>
</dbReference>
<dbReference type="NCBIfam" id="TIGR01241">
    <property type="entry name" value="FtsH_fam"/>
    <property type="match status" value="1"/>
</dbReference>
<dbReference type="PANTHER" id="PTHR23076:SF97">
    <property type="entry name" value="ATP-DEPENDENT ZINC METALLOPROTEASE YME1L1"/>
    <property type="match status" value="1"/>
</dbReference>
<dbReference type="PANTHER" id="PTHR23076">
    <property type="entry name" value="METALLOPROTEASE M41 FTSH"/>
    <property type="match status" value="1"/>
</dbReference>
<dbReference type="Pfam" id="PF00004">
    <property type="entry name" value="AAA"/>
    <property type="match status" value="1"/>
</dbReference>
<dbReference type="Pfam" id="PF17862">
    <property type="entry name" value="AAA_lid_3"/>
    <property type="match status" value="1"/>
</dbReference>
<dbReference type="Pfam" id="PF01434">
    <property type="entry name" value="Peptidase_M41"/>
    <property type="match status" value="1"/>
</dbReference>
<dbReference type="SMART" id="SM00382">
    <property type="entry name" value="AAA"/>
    <property type="match status" value="1"/>
</dbReference>
<dbReference type="SUPFAM" id="SSF140990">
    <property type="entry name" value="FtsH protease domain-like"/>
    <property type="match status" value="1"/>
</dbReference>
<dbReference type="SUPFAM" id="SSF52540">
    <property type="entry name" value="P-loop containing nucleoside triphosphate hydrolases"/>
    <property type="match status" value="1"/>
</dbReference>
<dbReference type="PROSITE" id="PS00674">
    <property type="entry name" value="AAA"/>
    <property type="match status" value="1"/>
</dbReference>
<proteinExistence type="evidence at protein level"/>
<organism>
    <name type="scientific">Mus musculus</name>
    <name type="common">Mouse</name>
    <dbReference type="NCBI Taxonomy" id="10090"/>
    <lineage>
        <taxon>Eukaryota</taxon>
        <taxon>Metazoa</taxon>
        <taxon>Chordata</taxon>
        <taxon>Craniata</taxon>
        <taxon>Vertebrata</taxon>
        <taxon>Euteleostomi</taxon>
        <taxon>Mammalia</taxon>
        <taxon>Eutheria</taxon>
        <taxon>Euarchontoglires</taxon>
        <taxon>Glires</taxon>
        <taxon>Rodentia</taxon>
        <taxon>Myomorpha</taxon>
        <taxon>Muroidea</taxon>
        <taxon>Muridae</taxon>
        <taxon>Murinae</taxon>
        <taxon>Mus</taxon>
        <taxon>Mus</taxon>
    </lineage>
</organism>
<name>YMEL1_MOUSE</name>
<sequence>MFSLSSTVQPQVTIPLSHLINAFHSPKNISVSVNTPVSQKQHRDTVPEHEAPSSEPVLNLRDLGLSELKIGQIDKMVENLLPGFYKDKRVSSCWHTSHISAQSFFENKYGHLDMFSTLRSSSLYRQHPKTLRSICSDLQYFPVFIQSRGFKTLKSRTRRLQSTSERLVEAQNIAPSFVKGFLLRDRGTDLESLDKLMKTKNIPEAHQDAFKTGFAEGFLKAQALTQKTNDSLRRTRLILFVLLLFGIYGLLKNPFLSVRFRTTTGLDSAVDPVQMKNVTFEHVKGVEEAKQELQEVVEFLKNPQKFTVLGGKLPKGILLVGPPGTGKTLLARAVAGEADVPFYYASGSEFDEMFVGVGASRIRNLFREAKANAPCVIFIDELDSVGGKRIESPMHPYSRQTINQLLAEMDGFKPNEGVIIIGATNFPEALDNALIRPGRFDMQVTVPRPDVKGRTEILKWYLNKIKFDKSVDPEIIARGTVGFSGAELENLVNQAALKAAVDGKEMVTMKELEFSKDKILMGPERRSVEIDNKNKTITAYHESGHAIIAYYTKDAMPINKATIMPRGPTLGHVSLLPENDRWNETRAQLLAQMDVSMGGRVAEELIFGTDHITTGASSDFDNATKIAKRMVTKFGMSEKLGVMTYSDTGKLSPETQSAIEQEIRILLRESYERAKHILKTHAKEHKNLAEALLTYETLDAKEIQIVLEGKKLEVR</sequence>
<evidence type="ECO:0000250" key="1">
    <source>
        <dbReference type="UniProtKB" id="Q96TA2"/>
    </source>
</evidence>
<evidence type="ECO:0000250" key="2">
    <source>
        <dbReference type="UniProtKB" id="Q9Y4W6"/>
    </source>
</evidence>
<evidence type="ECO:0000255" key="3"/>
<evidence type="ECO:0000256" key="4">
    <source>
        <dbReference type="SAM" id="MobiDB-lite"/>
    </source>
</evidence>
<evidence type="ECO:0000269" key="5">
    <source>
    </source>
</evidence>
<evidence type="ECO:0000269" key="6">
    <source>
    </source>
</evidence>
<evidence type="ECO:0000269" key="7">
    <source>
    </source>
</evidence>
<evidence type="ECO:0000269" key="8">
    <source>
    </source>
</evidence>
<evidence type="ECO:0000269" key="9">
    <source>
    </source>
</evidence>
<evidence type="ECO:0000269" key="10">
    <source>
    </source>
</evidence>
<evidence type="ECO:0000269" key="11">
    <source>
    </source>
</evidence>
<evidence type="ECO:0000269" key="12">
    <source>
    </source>
</evidence>
<evidence type="ECO:0000305" key="13"/>
<evidence type="ECO:0000305" key="14">
    <source>
    </source>
</evidence>
<keyword id="KW-0067">ATP-binding</keyword>
<keyword id="KW-0378">Hydrolase</keyword>
<keyword id="KW-0472">Membrane</keyword>
<keyword id="KW-0479">Metal-binding</keyword>
<keyword id="KW-0482">Metalloprotease</keyword>
<keyword id="KW-0496">Mitochondrion</keyword>
<keyword id="KW-0999">Mitochondrion inner membrane</keyword>
<keyword id="KW-0547">Nucleotide-binding</keyword>
<keyword id="KW-0645">Protease</keyword>
<keyword id="KW-1185">Reference proteome</keyword>
<keyword id="KW-0812">Transmembrane</keyword>
<keyword id="KW-1133">Transmembrane helix</keyword>
<keyword id="KW-0862">Zinc</keyword>
<accession>O88967</accession>
<accession>Q7TNN5</accession>
<comment type="function">
    <text evidence="1 5 6 7 8 9 11 12">ATP-dependent metalloprotease that catalyzes the degradation of folded and unfolded proteins with a suitable degron sequence in the mitochondrial intermembrane region (PubMed:17709429, PubMed:24616225, PubMed:24703695, PubMed:26785494, PubMed:27495975, PubMed:33237841). Plays an important role in regulating mitochondrial morphology and function by cleaving OPA1 at position S2, giving rise to a form of OPA1 that promotes maintenance of normal mitochondrial structure and mitochondrial protein metabolism (PubMed:17709429, PubMed:24616225, PubMed:24703695, PubMed:26785494, PubMed:27495975, PubMed:33237841). Ensures cell proliferation, maintains normal cristae morphology and complex I respiration activity, promotes antiapoptotic activity and protects mitochondria from the accumulation of oxidatively damaged membrane proteins (By similarity). Required to control the accumulation of nonassembled respiratory chain subunits (NDUFB6, OX4 and ND1) (By similarity). Involved in the mitochondrial adaptation in response to various signals, such as stress or developmental cues, by mediating degradation of mitochondrial proteins to rewire the mitochondrial proteome (PubMed:35172139). Catalyzes degradation of mitochondrial proteins, such as translocases, lipid transfer proteins and metabolic enzymes in response to nutrient starvation in order to limit mitochondrial biogenesis: mechanistically, YME1L is activated by decreased phosphatidylethanolamine levels caused by LPIN1 activity in response to mTORC1 inhibition (By similarity). Acts as a regulator of adult neural stem cell self-renewal by promoting mitochondrial proteome rewiring, preserving neural stem and progenitor cells self-renewal (PubMed:35172139). Required for normal, constitutive degradation of PRELID1 (PubMed:26785494). Catalyzes the degradation of OMA1 in response to membrane depolarization (By similarity). Mediates degradation of TIMM17A downstream of the integrated stress response (ISR) (By similarity). Catalyzes degradation of MICU1 when MICU1 is not assembled via an interchain disulfide (By similarity).</text>
</comment>
<comment type="catalytic activity">
    <reaction evidence="1">
        <text>ATP + H2O = ADP + phosphate + H(+)</text>
        <dbReference type="Rhea" id="RHEA:13065"/>
        <dbReference type="ChEBI" id="CHEBI:15377"/>
        <dbReference type="ChEBI" id="CHEBI:15378"/>
        <dbReference type="ChEBI" id="CHEBI:30616"/>
        <dbReference type="ChEBI" id="CHEBI:43474"/>
        <dbReference type="ChEBI" id="CHEBI:456216"/>
    </reaction>
    <physiologicalReaction direction="left-to-right" evidence="1">
        <dbReference type="Rhea" id="RHEA:13066"/>
    </physiologicalReaction>
</comment>
<comment type="cofactor">
    <cofactor evidence="1">
        <name>Zn(2+)</name>
        <dbReference type="ChEBI" id="CHEBI:29105"/>
    </cofactor>
    <text evidence="1">Binds 1 zinc ion per subunit.</text>
</comment>
<comment type="subunit">
    <text evidence="1">Homohexamer; may also form heterohexamers. Exists in several complexes of 600-1100 kDa. Interacts with AFG1L.</text>
</comment>
<comment type="subcellular location">
    <subcellularLocation>
        <location evidence="1">Mitochondrion inner membrane</location>
    </subcellularLocation>
    <subcellularLocation>
        <location evidence="1">Mitochondrion</location>
    </subcellularLocation>
</comment>
<comment type="tissue specificity">
    <text evidence="8">Detected in heart and skeletal muscle (at protein level).</text>
</comment>
<comment type="PTM">
    <text evidence="1">Proteolytically processed by mitochondrial processing peptidase (MPP) to generate the mature form. Degraded in an OMA1-dependent manner in response to oxidative stress.</text>
</comment>
<comment type="disruption phenotype">
    <text evidence="8 10 12">Complete embryonic lethality; embryos present a clear developmental delay at 8.5 dpc, and the hearts of mutant embryos fail to beat properly at 9.5 and 10.5 dpc (PubMed:26785494). Cardiomyocyte-specific gene disruption gives rise to animals that develop dilated cardiomyopathy and myocardial fibrosis at about 20 weeks after birth; mutants have a median life span of about 46 weeks, much shorter than wild-type (PubMed:26785494). Mitochondria from mutant cardiomyocytes are smaller than normal, but have normal cristae architecture and display no significant difference in the assembly of respiratory complexes (PubMed:26785494). Keeping mice with a cardiomyocyte-specific gene disruption on a high-fat diet leads to weight gain and reduced glucose tolerance, and prevents the development of cardiomyopathy (PubMed:26785494). Mice with Yme1l gene disruption in cardiomyocytes and skeletal muscle have a median life span of 125 weeks, similar to wild-type (PubMed:26785494). Their heart function is normal, in spite of the presence of fragmented mitochondria due to the loss of Opa1 cleavage at position S2 (PubMed:26785494). Skeletal muscle mitochondrial dysfunction is known to be associated with impaired insulin signaling and glucose intolerance, and as expected, these mice display impaired glucose homeostasis with decreased fasting insulin levels in the blood serum and glucose intolerance (PubMed:26785494). Mice with a double, cardiomyocyte-specific gene disruption of Yme1l and Oma1 have normal cardiac function and do not display myocardial fibrosis (PubMed:26785494). Likewise, cardiomyocyte mitochondria have normal morphology (PubMed:26785494). Mice with a skeletal muscle Yme1l gene disruption plus a double, cardiomyocyte-specific gene disruption of Yme1l and Oma1 display normal glucose tolerance (PubMed:26785494). Conditional deletion in the nervous system show ocular dysfunction with microphthalmia, cataracts and retinal inflammation (PubMed:30389680). Mice develop deficiencies in locomotor activity due to specific degeneration of spinal cord axons, which relay proprioceptive signals from the hind limbs to the cerebellum (PubMed:30389680). Conditional deletion in adult neural stem cells results in defective self-renewal and premature differentiation, leading to neural stem cell pool depletion (PubMed:35172139).</text>
</comment>
<comment type="similarity">
    <text evidence="13">In the N-terminal section; belongs to the AAA ATPase family.</text>
</comment>
<comment type="similarity">
    <text evidence="13">In the C-terminal section; belongs to the peptidase M41 family.</text>
</comment>
<gene>
    <name type="primary">Yme1l1</name>
</gene>
<protein>
    <recommendedName>
        <fullName>ATP-dependent zinc metalloprotease YME1L1</fullName>
        <ecNumber evidence="9 11 12">3.4.24.-</ecNumber>
        <ecNumber evidence="1">3.6.-.-</ecNumber>
    </recommendedName>
    <alternativeName>
        <fullName>ATP-dependent metalloprotease FtsH1</fullName>
    </alternativeName>
    <alternativeName>
        <fullName>YME1-like protein 1</fullName>
    </alternativeName>
</protein>